<organism>
    <name type="scientific">Saccharomyces cerevisiae (strain ATCC 204508 / S288c)</name>
    <name type="common">Baker's yeast</name>
    <dbReference type="NCBI Taxonomy" id="559292"/>
    <lineage>
        <taxon>Eukaryota</taxon>
        <taxon>Fungi</taxon>
        <taxon>Dikarya</taxon>
        <taxon>Ascomycota</taxon>
        <taxon>Saccharomycotina</taxon>
        <taxon>Saccharomycetes</taxon>
        <taxon>Saccharomycetales</taxon>
        <taxon>Saccharomycetaceae</taxon>
        <taxon>Saccharomyces</taxon>
    </lineage>
</organism>
<gene>
    <name type="primary">STF2</name>
    <name type="ordered locus">YGR008C</name>
    <name type="ORF">G3858</name>
</gene>
<accession>P16965</accession>
<accession>D6VUE5</accession>
<accession>P89099</accession>
<feature type="initiator methionine" description="Removed" evidence="6">
    <location>
        <position position="1"/>
    </location>
</feature>
<feature type="chain" id="PRO_0000072269" description="ATPase-stabilizing factor 15 kDa protein">
    <location>
        <begin position="2"/>
        <end position="84"/>
    </location>
</feature>
<feature type="region of interest" description="Disordered" evidence="1">
    <location>
        <begin position="1"/>
        <end position="84"/>
    </location>
</feature>
<feature type="compositionally biased region" description="Basic and acidic residues" evidence="1">
    <location>
        <begin position="1"/>
        <end position="18"/>
    </location>
</feature>
<feature type="compositionally biased region" description="Basic and acidic residues" evidence="1">
    <location>
        <begin position="74"/>
        <end position="84"/>
    </location>
</feature>
<feature type="modified residue" description="Phosphoserine" evidence="9 10 11">
    <location>
        <position position="28"/>
    </location>
</feature>
<feature type="modified residue" description="Phosphoserine" evidence="9 10 11">
    <location>
        <position position="69"/>
    </location>
</feature>
<feature type="sequence conflict" description="In Ref. 6; AA sequence." evidence="8" ref="6">
    <original>D</original>
    <variation>N</variation>
    <location>
        <position position="15"/>
    </location>
</feature>
<feature type="sequence conflict" description="In Ref. 6; AA sequence." evidence="8" ref="6">
    <original>E</original>
    <variation>Q</variation>
    <location>
        <position position="27"/>
    </location>
</feature>
<feature type="sequence conflict" description="In Ref. 6; AA sequence." evidence="8" ref="6">
    <original>N</original>
    <variation>S</variation>
    <location>
        <position position="55"/>
    </location>
</feature>
<feature type="sequence conflict" description="In Ref. 2; BAA09311." evidence="8" ref="2">
    <original>VFKKDRRGSNLQSHEQKFENVQKE</original>
    <variation>SVQER</variation>
    <location>
        <begin position="61"/>
        <end position="84"/>
    </location>
</feature>
<protein>
    <recommendedName>
        <fullName evidence="8">ATPase-stabilizing factor 15 kDa protein</fullName>
    </recommendedName>
    <alternativeName>
        <fullName evidence="8">15 kDa ATPase inhibitor complex-stabilizing factor</fullName>
        <shortName>15K</shortName>
    </alternativeName>
    <alternativeName>
        <fullName evidence="7">Hydrophilin STF2</fullName>
    </alternativeName>
    <alternativeName>
        <fullName>Stabilizing factor 2</fullName>
    </alternativeName>
</protein>
<name>STF2_YEAST</name>
<reference key="1">
    <citation type="journal article" date="1990" name="Eur. J. Biochem.">
        <title>Isolation of a gene for a regulatory 15-kDa subunit of mitochondrial F1F0-ATPase and construction of mutant yeast lacking the protein.</title>
        <authorList>
            <person name="Yoshida Y."/>
            <person name="Sato T."/>
            <person name="Hashimoto T."/>
            <person name="Ichikawa N."/>
            <person name="Nakai S."/>
            <person name="Yoshikawa H."/>
            <person name="Imamoto F."/>
            <person name="Tagawa K."/>
        </authorList>
    </citation>
    <scope>NUCLEOTIDE SEQUENCE [GENOMIC DNA]</scope>
    <source>
        <strain>ATCC 26786 / X2180-1A</strain>
    </source>
</reference>
<reference key="2">
    <citation type="journal article" date="1996" name="J. Biochem.">
        <title>Isolation and characterization of ECT1 gene encoding CTP: phosphoethanolamine cytidylyltransferase of Saccharomyces cerevisiae.</title>
        <authorList>
            <person name="Min-Seok R."/>
            <person name="Kawamata Y."/>
            <person name="Nakamura H."/>
            <person name="Ohta A."/>
            <person name="Takagi M."/>
        </authorList>
    </citation>
    <scope>NUCLEOTIDE SEQUENCE [GENOMIC DNA]</scope>
    <source>
        <strain>S288c / GRF88</strain>
    </source>
</reference>
<reference key="3">
    <citation type="journal article" date="1997" name="Nature">
        <title>The nucleotide sequence of Saccharomyces cerevisiae chromosome VII.</title>
        <authorList>
            <person name="Tettelin H."/>
            <person name="Agostoni-Carbone M.L."/>
            <person name="Albermann K."/>
            <person name="Albers M."/>
            <person name="Arroyo J."/>
            <person name="Backes U."/>
            <person name="Barreiros T."/>
            <person name="Bertani I."/>
            <person name="Bjourson A.J."/>
            <person name="Brueckner M."/>
            <person name="Bruschi C.V."/>
            <person name="Carignani G."/>
            <person name="Castagnoli L."/>
            <person name="Cerdan E."/>
            <person name="Clemente M.L."/>
            <person name="Coblenz A."/>
            <person name="Coglievina M."/>
            <person name="Coissac E."/>
            <person name="Defoor E."/>
            <person name="Del Bino S."/>
            <person name="Delius H."/>
            <person name="Delneri D."/>
            <person name="de Wergifosse P."/>
            <person name="Dujon B."/>
            <person name="Durand P."/>
            <person name="Entian K.-D."/>
            <person name="Eraso P."/>
            <person name="Escribano V."/>
            <person name="Fabiani L."/>
            <person name="Fartmann B."/>
            <person name="Feroli F."/>
            <person name="Feuermann M."/>
            <person name="Frontali L."/>
            <person name="Garcia-Gonzalez M."/>
            <person name="Garcia-Saez M.I."/>
            <person name="Goffeau A."/>
            <person name="Guerreiro P."/>
            <person name="Hani J."/>
            <person name="Hansen M."/>
            <person name="Hebling U."/>
            <person name="Hernandez K."/>
            <person name="Heumann K."/>
            <person name="Hilger F."/>
            <person name="Hofmann B."/>
            <person name="Indge K.J."/>
            <person name="James C.M."/>
            <person name="Klima R."/>
            <person name="Koetter P."/>
            <person name="Kramer B."/>
            <person name="Kramer W."/>
            <person name="Lauquin G."/>
            <person name="Leuther H."/>
            <person name="Louis E.J."/>
            <person name="Maillier E."/>
            <person name="Marconi A."/>
            <person name="Martegani E."/>
            <person name="Mazon M.J."/>
            <person name="Mazzoni C."/>
            <person name="McReynolds A.D.K."/>
            <person name="Melchioretto P."/>
            <person name="Mewes H.-W."/>
            <person name="Minenkova O."/>
            <person name="Mueller-Auer S."/>
            <person name="Nawrocki A."/>
            <person name="Netter P."/>
            <person name="Neu R."/>
            <person name="Nombela C."/>
            <person name="Oliver S.G."/>
            <person name="Panzeri L."/>
            <person name="Paoluzi S."/>
            <person name="Plevani P."/>
            <person name="Portetelle D."/>
            <person name="Portillo F."/>
            <person name="Potier S."/>
            <person name="Purnelle B."/>
            <person name="Rieger M."/>
            <person name="Riles L."/>
            <person name="Rinaldi T."/>
            <person name="Robben J."/>
            <person name="Rodrigues-Pousada C."/>
            <person name="Rodriguez-Belmonte E."/>
            <person name="Rodriguez-Torres A.M."/>
            <person name="Rose M."/>
            <person name="Ruzzi M."/>
            <person name="Saliola M."/>
            <person name="Sanchez-Perez M."/>
            <person name="Schaefer B."/>
            <person name="Schaefer M."/>
            <person name="Scharfe M."/>
            <person name="Schmidheini T."/>
            <person name="Schreer A."/>
            <person name="Skala J."/>
            <person name="Souciet J.-L."/>
            <person name="Steensma H.Y."/>
            <person name="Talla E."/>
            <person name="Thierry A."/>
            <person name="Vandenbol M."/>
            <person name="van der Aart Q.J.M."/>
            <person name="Van Dyck L."/>
            <person name="Vanoni M."/>
            <person name="Verhasselt P."/>
            <person name="Voet M."/>
            <person name="Volckaert G."/>
            <person name="Wambutt R."/>
            <person name="Watson M.D."/>
            <person name="Weber N."/>
            <person name="Wedler E."/>
            <person name="Wedler H."/>
            <person name="Wipfli P."/>
            <person name="Wolf K."/>
            <person name="Wright L.F."/>
            <person name="Zaccaria P."/>
            <person name="Zimmermann M."/>
            <person name="Zollner A."/>
            <person name="Kleine K."/>
        </authorList>
    </citation>
    <scope>NUCLEOTIDE SEQUENCE [LARGE SCALE GENOMIC DNA]</scope>
    <source>
        <strain>ATCC 204508 / S288c</strain>
    </source>
</reference>
<reference key="4">
    <citation type="journal article" date="2014" name="G3 (Bethesda)">
        <title>The reference genome sequence of Saccharomyces cerevisiae: Then and now.</title>
        <authorList>
            <person name="Engel S.R."/>
            <person name="Dietrich F.S."/>
            <person name="Fisk D.G."/>
            <person name="Binkley G."/>
            <person name="Balakrishnan R."/>
            <person name="Costanzo M.C."/>
            <person name="Dwight S.S."/>
            <person name="Hitz B.C."/>
            <person name="Karra K."/>
            <person name="Nash R.S."/>
            <person name="Weng S."/>
            <person name="Wong E.D."/>
            <person name="Lloyd P."/>
            <person name="Skrzypek M.S."/>
            <person name="Miyasato S.R."/>
            <person name="Simison M."/>
            <person name="Cherry J.M."/>
        </authorList>
    </citation>
    <scope>GENOME REANNOTATION</scope>
    <source>
        <strain>ATCC 204508 / S288c</strain>
    </source>
</reference>
<reference key="5">
    <citation type="journal article" date="2007" name="Genome Res.">
        <title>Approaching a complete repository of sequence-verified protein-encoding clones for Saccharomyces cerevisiae.</title>
        <authorList>
            <person name="Hu Y."/>
            <person name="Rolfs A."/>
            <person name="Bhullar B."/>
            <person name="Murthy T.V.S."/>
            <person name="Zhu C."/>
            <person name="Berger M.F."/>
            <person name="Camargo A.A."/>
            <person name="Kelley F."/>
            <person name="McCarron S."/>
            <person name="Jepson D."/>
            <person name="Richardson A."/>
            <person name="Raphael J."/>
            <person name="Moreira D."/>
            <person name="Taycher E."/>
            <person name="Zuo D."/>
            <person name="Mohr S."/>
            <person name="Kane M.F."/>
            <person name="Williamson J."/>
            <person name="Simpson A.J.G."/>
            <person name="Bulyk M.L."/>
            <person name="Harlow E."/>
            <person name="Marsischky G."/>
            <person name="Kolodner R.D."/>
            <person name="LaBaer J."/>
        </authorList>
    </citation>
    <scope>NUCLEOTIDE SEQUENCE [GENOMIC DNA]</scope>
    <source>
        <strain>ATCC 204508 / S288c</strain>
    </source>
</reference>
<reference key="6">
    <citation type="journal article" date="1984" name="FEBS Lett.">
        <title>Primary structure of a regulating factor, 15 kDa protein, of ATP synthase in yeast mitochondria.</title>
        <authorList>
            <person name="Yoshida Y."/>
            <person name="Wakabayashi S."/>
            <person name="Matsubara H."/>
            <person name="Hashimoto T."/>
            <person name="Tagawa K."/>
        </authorList>
    </citation>
    <scope>PROTEIN SEQUENCE OF 2-84</scope>
</reference>
<reference key="7">
    <citation type="journal article" date="1984" name="J. Biochem.">
        <title>Purification and properties of factors in yeast mitochondria stabilizing the F1F0-ATPase-inhibitor complex.</title>
        <authorList>
            <person name="Hashimoto T."/>
            <person name="Yoshida Y."/>
            <person name="Tagawa K."/>
        </authorList>
    </citation>
    <scope>FUNCTION</scope>
    <scope>SUBCELLULAR LOCATION</scope>
</reference>
<reference key="8">
    <citation type="journal article" date="1990" name="J. Biochem.">
        <title>Simultaneous bindings of ATPase inhibitor and 9K protein to F1F0-ATPase in the presence of 15K protein in yeast mitochondria.</title>
        <authorList>
            <person name="Hashimoto T."/>
            <person name="Yoshida Y."/>
            <person name="Tagawa K."/>
        </authorList>
    </citation>
    <scope>FUNCTION</scope>
</reference>
<reference key="9">
    <citation type="journal article" date="2003" name="Nature">
        <title>Global analysis of protein expression in yeast.</title>
        <authorList>
            <person name="Ghaemmaghami S."/>
            <person name="Huh W.-K."/>
            <person name="Bower K."/>
            <person name="Howson R.W."/>
            <person name="Belle A."/>
            <person name="Dephoure N."/>
            <person name="O'Shea E.K."/>
            <person name="Weissman J.S."/>
        </authorList>
    </citation>
    <scope>LEVEL OF PROTEIN EXPRESSION [LARGE SCALE ANALYSIS]</scope>
</reference>
<reference key="10">
    <citation type="journal article" date="2007" name="Proc. Natl. Acad. Sci. U.S.A.">
        <title>Analysis of phosphorylation sites on proteins from Saccharomyces cerevisiae by electron transfer dissociation (ETD) mass spectrometry.</title>
        <authorList>
            <person name="Chi A."/>
            <person name="Huttenhower C."/>
            <person name="Geer L.Y."/>
            <person name="Coon J.J."/>
            <person name="Syka J.E.P."/>
            <person name="Bai D.L."/>
            <person name="Shabanowitz J."/>
            <person name="Burke D.J."/>
            <person name="Troyanskaya O.G."/>
            <person name="Hunt D.F."/>
        </authorList>
    </citation>
    <scope>PHOSPHORYLATION [LARGE SCALE ANALYSIS] AT SER-28 AND SER-69</scope>
    <scope>IDENTIFICATION BY MASS SPECTROMETRY [LARGE SCALE ANALYSIS]</scope>
</reference>
<reference key="11">
    <citation type="journal article" date="2008" name="Mol. Cell. Proteomics">
        <title>A multidimensional chromatography technology for in-depth phosphoproteome analysis.</title>
        <authorList>
            <person name="Albuquerque C.P."/>
            <person name="Smolka M.B."/>
            <person name="Payne S.H."/>
            <person name="Bafna V."/>
            <person name="Eng J."/>
            <person name="Zhou H."/>
        </authorList>
    </citation>
    <scope>PHOSPHORYLATION [LARGE SCALE ANALYSIS] AT SER-28 AND SER-69</scope>
    <scope>IDENTIFICATION BY MASS SPECTROMETRY [LARGE SCALE ANALYSIS]</scope>
</reference>
<reference key="12">
    <citation type="journal article" date="2009" name="Science">
        <title>Global analysis of Cdk1 substrate phosphorylation sites provides insights into evolution.</title>
        <authorList>
            <person name="Holt L.J."/>
            <person name="Tuch B.B."/>
            <person name="Villen J."/>
            <person name="Johnson A.D."/>
            <person name="Gygi S.P."/>
            <person name="Morgan D.O."/>
        </authorList>
    </citation>
    <scope>PHOSPHORYLATION [LARGE SCALE ANALYSIS] AT SER-28 AND SER-69</scope>
    <scope>IDENTIFICATION BY MASS SPECTROMETRY [LARGE SCALE ANALYSIS]</scope>
</reference>
<reference key="13">
    <citation type="journal article" date="2012" name="PLoS ONE">
        <title>The STF2p hydrophilin from Saccharomyces cerevisiae is required for dehydration stress tolerance.</title>
        <authorList>
            <person name="Lopez-Martinez G."/>
            <person name="Rodriguez-Porrata B."/>
            <person name="Margalef-Catala M."/>
            <person name="Cordero-Otero R."/>
        </authorList>
    </citation>
    <scope>FUNCTION</scope>
    <scope>SUBCELLULAR LOCATION</scope>
</reference>
<comment type="function">
    <text evidence="3 4 5">Found to stabilize, together with STF1, a complex of intrinsic ATPase inhibitor INH1 and proton-translocating ATPase (F(1)F(0)-ATPase) in mitochondrial membranes (PubMed:6200468). Binds to the F0 part and may function to hold the ATPase inhibitor or STF1 on the F1 subunit (PubMed:2172220). Also acts as a hydrophilins that enhances dry stress tolerance. Cell viability after desiccation and rehydration is due to the antioxidant capacity of the protein, which reduces the number of apoptotic cells during stress conditions by minimising the accumulation of reactive oxygen species (ROS) in the cells (PubMed:22442684).</text>
</comment>
<comment type="subcellular location">
    <subcellularLocation>
        <location evidence="5">Mitochondrion</location>
    </subcellularLocation>
    <subcellularLocation>
        <location evidence="4">Cytoplasm</location>
    </subcellularLocation>
</comment>
<comment type="miscellaneous">
    <text evidence="2">Present with 5330 molecules/cell in log phase SD medium.</text>
</comment>
<comment type="similarity">
    <text evidence="8">Belongs to the STF2 family.</text>
</comment>
<keyword id="KW-0963">Cytoplasm</keyword>
<keyword id="KW-0903">Direct protein sequencing</keyword>
<keyword id="KW-0496">Mitochondrion</keyword>
<keyword id="KW-0597">Phosphoprotein</keyword>
<keyword id="KW-1185">Reference proteome</keyword>
<dbReference type="EMBL" id="D00444">
    <property type="protein sequence ID" value="BAA00345.1"/>
    <property type="molecule type" value="Genomic_DNA"/>
</dbReference>
<dbReference type="EMBL" id="D50644">
    <property type="protein sequence ID" value="BAA09311.1"/>
    <property type="molecule type" value="Genomic_DNA"/>
</dbReference>
<dbReference type="EMBL" id="Z72793">
    <property type="protein sequence ID" value="CAA96991.1"/>
    <property type="molecule type" value="Genomic_DNA"/>
</dbReference>
<dbReference type="EMBL" id="AY558270">
    <property type="protein sequence ID" value="AAS56596.1"/>
    <property type="molecule type" value="Genomic_DNA"/>
</dbReference>
<dbReference type="EMBL" id="BK006941">
    <property type="protein sequence ID" value="DAA08106.1"/>
    <property type="molecule type" value="Genomic_DNA"/>
</dbReference>
<dbReference type="PIR" id="S12201">
    <property type="entry name" value="S12201"/>
</dbReference>
<dbReference type="RefSeq" id="NP_011522.1">
    <property type="nucleotide sequence ID" value="NM_001181137.1"/>
</dbReference>
<dbReference type="BioGRID" id="33252">
    <property type="interactions" value="89"/>
</dbReference>
<dbReference type="FunCoup" id="P16965">
    <property type="interactions" value="160"/>
</dbReference>
<dbReference type="IntAct" id="P16965">
    <property type="interactions" value="4"/>
</dbReference>
<dbReference type="MINT" id="P16965"/>
<dbReference type="STRING" id="4932.YGR008C"/>
<dbReference type="iPTMnet" id="P16965"/>
<dbReference type="PaxDb" id="4932-YGR008C"/>
<dbReference type="PeptideAtlas" id="P16965"/>
<dbReference type="EnsemblFungi" id="YGR008C_mRNA">
    <property type="protein sequence ID" value="YGR008C"/>
    <property type="gene ID" value="YGR008C"/>
</dbReference>
<dbReference type="GeneID" id="852891"/>
<dbReference type="KEGG" id="sce:YGR008C"/>
<dbReference type="AGR" id="SGD:S000003240"/>
<dbReference type="SGD" id="S000003240">
    <property type="gene designation" value="STF2"/>
</dbReference>
<dbReference type="VEuPathDB" id="FungiDB:YGR008C"/>
<dbReference type="eggNOG" id="ENOG502S4WH">
    <property type="taxonomic scope" value="Eukaryota"/>
</dbReference>
<dbReference type="HOGENOM" id="CLU_186295_0_0_1"/>
<dbReference type="InParanoid" id="P16965"/>
<dbReference type="OMA" id="RTNKWTE"/>
<dbReference type="OrthoDB" id="2122308at2759"/>
<dbReference type="BioCyc" id="YEAST:G3O-30738-MONOMER"/>
<dbReference type="BioGRID-ORCS" id="852891">
    <property type="hits" value="0 hits in 10 CRISPR screens"/>
</dbReference>
<dbReference type="ChiTaRS" id="STF2">
    <property type="organism name" value="yeast"/>
</dbReference>
<dbReference type="PRO" id="PR:P16965"/>
<dbReference type="Proteomes" id="UP000002311">
    <property type="component" value="Chromosome VII"/>
</dbReference>
<dbReference type="RNAct" id="P16965">
    <property type="molecule type" value="protein"/>
</dbReference>
<dbReference type="GO" id="GO:0005737">
    <property type="term" value="C:cytoplasm"/>
    <property type="evidence" value="ECO:0000314"/>
    <property type="project" value="SGD"/>
</dbReference>
<dbReference type="GO" id="GO:0005739">
    <property type="term" value="C:mitochondrion"/>
    <property type="evidence" value="ECO:0007669"/>
    <property type="project" value="UniProtKB-SubCell"/>
</dbReference>
<dbReference type="GO" id="GO:0071465">
    <property type="term" value="P:cellular response to desiccation"/>
    <property type="evidence" value="ECO:0000315"/>
    <property type="project" value="SGD"/>
</dbReference>
<sequence length="84" mass="9615">MTRTNKWTEREGKADPKYFSHTGNYGESPNHIKKQGSGKGNWGKPGDEIDDLIDNGEIPPVFKKDRRGSNLQSHEQKFENVQKE</sequence>
<proteinExistence type="evidence at protein level"/>
<evidence type="ECO:0000256" key="1">
    <source>
        <dbReference type="SAM" id="MobiDB-lite"/>
    </source>
</evidence>
<evidence type="ECO:0000269" key="2">
    <source>
    </source>
</evidence>
<evidence type="ECO:0000269" key="3">
    <source>
    </source>
</evidence>
<evidence type="ECO:0000269" key="4">
    <source>
    </source>
</evidence>
<evidence type="ECO:0000269" key="5">
    <source>
    </source>
</evidence>
<evidence type="ECO:0000269" key="6">
    <source ref="6"/>
</evidence>
<evidence type="ECO:0000303" key="7">
    <source>
    </source>
</evidence>
<evidence type="ECO:0000305" key="8"/>
<evidence type="ECO:0007744" key="9">
    <source>
    </source>
</evidence>
<evidence type="ECO:0007744" key="10">
    <source>
    </source>
</evidence>
<evidence type="ECO:0007744" key="11">
    <source>
    </source>
</evidence>